<name>DXR_PARPJ</name>
<comment type="function">
    <text evidence="1">Catalyzes the NADPH-dependent rearrangement and reduction of 1-deoxy-D-xylulose-5-phosphate (DXP) to 2-C-methyl-D-erythritol 4-phosphate (MEP).</text>
</comment>
<comment type="catalytic activity">
    <reaction evidence="1">
        <text>2-C-methyl-D-erythritol 4-phosphate + NADP(+) = 1-deoxy-D-xylulose 5-phosphate + NADPH + H(+)</text>
        <dbReference type="Rhea" id="RHEA:13717"/>
        <dbReference type="ChEBI" id="CHEBI:15378"/>
        <dbReference type="ChEBI" id="CHEBI:57783"/>
        <dbReference type="ChEBI" id="CHEBI:57792"/>
        <dbReference type="ChEBI" id="CHEBI:58262"/>
        <dbReference type="ChEBI" id="CHEBI:58349"/>
        <dbReference type="EC" id="1.1.1.267"/>
    </reaction>
    <physiologicalReaction direction="right-to-left" evidence="1">
        <dbReference type="Rhea" id="RHEA:13719"/>
    </physiologicalReaction>
</comment>
<comment type="cofactor">
    <cofactor evidence="1">
        <name>Mg(2+)</name>
        <dbReference type="ChEBI" id="CHEBI:18420"/>
    </cofactor>
    <cofactor evidence="1">
        <name>Mn(2+)</name>
        <dbReference type="ChEBI" id="CHEBI:29035"/>
    </cofactor>
</comment>
<comment type="pathway">
    <text evidence="1">Isoprenoid biosynthesis; isopentenyl diphosphate biosynthesis via DXP pathway; isopentenyl diphosphate from 1-deoxy-D-xylulose 5-phosphate: step 1/6.</text>
</comment>
<comment type="similarity">
    <text evidence="1">Belongs to the DXR family.</text>
</comment>
<keyword id="KW-0414">Isoprene biosynthesis</keyword>
<keyword id="KW-0464">Manganese</keyword>
<keyword id="KW-0479">Metal-binding</keyword>
<keyword id="KW-0521">NADP</keyword>
<keyword id="KW-0560">Oxidoreductase</keyword>
<dbReference type="EC" id="1.1.1.267" evidence="1"/>
<dbReference type="EMBL" id="CP001052">
    <property type="protein sequence ID" value="ACD16845.1"/>
    <property type="molecule type" value="Genomic_DNA"/>
</dbReference>
<dbReference type="RefSeq" id="WP_012433442.1">
    <property type="nucleotide sequence ID" value="NC_010681.1"/>
</dbReference>
<dbReference type="SMR" id="B2T5I8"/>
<dbReference type="STRING" id="398527.Bphyt_2449"/>
<dbReference type="KEGG" id="bpy:Bphyt_2449"/>
<dbReference type="eggNOG" id="COG0743">
    <property type="taxonomic scope" value="Bacteria"/>
</dbReference>
<dbReference type="HOGENOM" id="CLU_035714_4_0_4"/>
<dbReference type="OrthoDB" id="9806546at2"/>
<dbReference type="UniPathway" id="UPA00056">
    <property type="reaction ID" value="UER00092"/>
</dbReference>
<dbReference type="Proteomes" id="UP000001739">
    <property type="component" value="Chromosome 1"/>
</dbReference>
<dbReference type="GO" id="GO:0030604">
    <property type="term" value="F:1-deoxy-D-xylulose-5-phosphate reductoisomerase activity"/>
    <property type="evidence" value="ECO:0007669"/>
    <property type="project" value="UniProtKB-UniRule"/>
</dbReference>
<dbReference type="GO" id="GO:0030145">
    <property type="term" value="F:manganese ion binding"/>
    <property type="evidence" value="ECO:0007669"/>
    <property type="project" value="TreeGrafter"/>
</dbReference>
<dbReference type="GO" id="GO:0070402">
    <property type="term" value="F:NADPH binding"/>
    <property type="evidence" value="ECO:0007669"/>
    <property type="project" value="InterPro"/>
</dbReference>
<dbReference type="GO" id="GO:0051484">
    <property type="term" value="P:isopentenyl diphosphate biosynthetic process, methylerythritol 4-phosphate pathway involved in terpenoid biosynthetic process"/>
    <property type="evidence" value="ECO:0007669"/>
    <property type="project" value="TreeGrafter"/>
</dbReference>
<dbReference type="FunFam" id="3.40.50.720:FF:000045">
    <property type="entry name" value="1-deoxy-D-xylulose 5-phosphate reductoisomerase"/>
    <property type="match status" value="1"/>
</dbReference>
<dbReference type="Gene3D" id="1.10.1740.10">
    <property type="match status" value="1"/>
</dbReference>
<dbReference type="Gene3D" id="3.40.50.720">
    <property type="entry name" value="NAD(P)-binding Rossmann-like Domain"/>
    <property type="match status" value="1"/>
</dbReference>
<dbReference type="HAMAP" id="MF_00183">
    <property type="entry name" value="DXP_reductoisom"/>
    <property type="match status" value="1"/>
</dbReference>
<dbReference type="InterPro" id="IPR003821">
    <property type="entry name" value="DXP_reductoisomerase"/>
</dbReference>
<dbReference type="InterPro" id="IPR013644">
    <property type="entry name" value="DXP_reductoisomerase_C"/>
</dbReference>
<dbReference type="InterPro" id="IPR013512">
    <property type="entry name" value="DXP_reductoisomerase_N"/>
</dbReference>
<dbReference type="InterPro" id="IPR026877">
    <property type="entry name" value="DXPR_C"/>
</dbReference>
<dbReference type="InterPro" id="IPR036169">
    <property type="entry name" value="DXPR_C_sf"/>
</dbReference>
<dbReference type="InterPro" id="IPR036291">
    <property type="entry name" value="NAD(P)-bd_dom_sf"/>
</dbReference>
<dbReference type="NCBIfam" id="TIGR00243">
    <property type="entry name" value="Dxr"/>
    <property type="match status" value="1"/>
</dbReference>
<dbReference type="NCBIfam" id="NF003938">
    <property type="entry name" value="PRK05447.1-1"/>
    <property type="match status" value="1"/>
</dbReference>
<dbReference type="NCBIfam" id="NF009114">
    <property type="entry name" value="PRK12464.1"/>
    <property type="match status" value="1"/>
</dbReference>
<dbReference type="PANTHER" id="PTHR30525">
    <property type="entry name" value="1-DEOXY-D-XYLULOSE 5-PHOSPHATE REDUCTOISOMERASE"/>
    <property type="match status" value="1"/>
</dbReference>
<dbReference type="PANTHER" id="PTHR30525:SF0">
    <property type="entry name" value="1-DEOXY-D-XYLULOSE 5-PHOSPHATE REDUCTOISOMERASE, CHLOROPLASTIC"/>
    <property type="match status" value="1"/>
</dbReference>
<dbReference type="Pfam" id="PF08436">
    <property type="entry name" value="DXP_redisom_C"/>
    <property type="match status" value="1"/>
</dbReference>
<dbReference type="Pfam" id="PF02670">
    <property type="entry name" value="DXP_reductoisom"/>
    <property type="match status" value="1"/>
</dbReference>
<dbReference type="Pfam" id="PF13288">
    <property type="entry name" value="DXPR_C"/>
    <property type="match status" value="1"/>
</dbReference>
<dbReference type="PIRSF" id="PIRSF006205">
    <property type="entry name" value="Dxp_reductismrs"/>
    <property type="match status" value="1"/>
</dbReference>
<dbReference type="SUPFAM" id="SSF69055">
    <property type="entry name" value="1-deoxy-D-xylulose-5-phosphate reductoisomerase, C-terminal domain"/>
    <property type="match status" value="1"/>
</dbReference>
<dbReference type="SUPFAM" id="SSF55347">
    <property type="entry name" value="Glyceraldehyde-3-phosphate dehydrogenase-like, C-terminal domain"/>
    <property type="match status" value="1"/>
</dbReference>
<dbReference type="SUPFAM" id="SSF51735">
    <property type="entry name" value="NAD(P)-binding Rossmann-fold domains"/>
    <property type="match status" value="1"/>
</dbReference>
<feature type="chain" id="PRO_1000098480" description="1-deoxy-D-xylulose 5-phosphate reductoisomerase">
    <location>
        <begin position="1"/>
        <end position="401"/>
    </location>
</feature>
<feature type="binding site" evidence="1">
    <location>
        <position position="11"/>
    </location>
    <ligand>
        <name>NADPH</name>
        <dbReference type="ChEBI" id="CHEBI:57783"/>
    </ligand>
</feature>
<feature type="binding site" evidence="1">
    <location>
        <position position="12"/>
    </location>
    <ligand>
        <name>NADPH</name>
        <dbReference type="ChEBI" id="CHEBI:57783"/>
    </ligand>
</feature>
<feature type="binding site" evidence="1">
    <location>
        <position position="13"/>
    </location>
    <ligand>
        <name>NADPH</name>
        <dbReference type="ChEBI" id="CHEBI:57783"/>
    </ligand>
</feature>
<feature type="binding site" evidence="1">
    <location>
        <position position="14"/>
    </location>
    <ligand>
        <name>NADPH</name>
        <dbReference type="ChEBI" id="CHEBI:57783"/>
    </ligand>
</feature>
<feature type="binding site" evidence="1">
    <location>
        <position position="38"/>
    </location>
    <ligand>
        <name>NADPH</name>
        <dbReference type="ChEBI" id="CHEBI:57783"/>
    </ligand>
</feature>
<feature type="binding site" evidence="1">
    <location>
        <position position="39"/>
    </location>
    <ligand>
        <name>NADPH</name>
        <dbReference type="ChEBI" id="CHEBI:57783"/>
    </ligand>
</feature>
<feature type="binding site" evidence="1">
    <location>
        <position position="125"/>
    </location>
    <ligand>
        <name>NADPH</name>
        <dbReference type="ChEBI" id="CHEBI:57783"/>
    </ligand>
</feature>
<feature type="binding site" evidence="1">
    <location>
        <position position="126"/>
    </location>
    <ligand>
        <name>1-deoxy-D-xylulose 5-phosphate</name>
        <dbReference type="ChEBI" id="CHEBI:57792"/>
    </ligand>
</feature>
<feature type="binding site" evidence="1">
    <location>
        <position position="127"/>
    </location>
    <ligand>
        <name>NADPH</name>
        <dbReference type="ChEBI" id="CHEBI:57783"/>
    </ligand>
</feature>
<feature type="binding site" evidence="1">
    <location>
        <position position="151"/>
    </location>
    <ligand>
        <name>Mn(2+)</name>
        <dbReference type="ChEBI" id="CHEBI:29035"/>
    </ligand>
</feature>
<feature type="binding site" evidence="1">
    <location>
        <position position="152"/>
    </location>
    <ligand>
        <name>1-deoxy-D-xylulose 5-phosphate</name>
        <dbReference type="ChEBI" id="CHEBI:57792"/>
    </ligand>
</feature>
<feature type="binding site" evidence="1">
    <location>
        <position position="153"/>
    </location>
    <ligand>
        <name>1-deoxy-D-xylulose 5-phosphate</name>
        <dbReference type="ChEBI" id="CHEBI:57792"/>
    </ligand>
</feature>
<feature type="binding site" evidence="1">
    <location>
        <position position="153"/>
    </location>
    <ligand>
        <name>Mn(2+)</name>
        <dbReference type="ChEBI" id="CHEBI:29035"/>
    </ligand>
</feature>
<feature type="binding site" evidence="1">
    <location>
        <position position="179"/>
    </location>
    <ligand>
        <name>1-deoxy-D-xylulose 5-phosphate</name>
        <dbReference type="ChEBI" id="CHEBI:57792"/>
    </ligand>
</feature>
<feature type="binding site" evidence="1">
    <location>
        <position position="202"/>
    </location>
    <ligand>
        <name>1-deoxy-D-xylulose 5-phosphate</name>
        <dbReference type="ChEBI" id="CHEBI:57792"/>
    </ligand>
</feature>
<feature type="binding site" evidence="1">
    <location>
        <position position="208"/>
    </location>
    <ligand>
        <name>NADPH</name>
        <dbReference type="ChEBI" id="CHEBI:57783"/>
    </ligand>
</feature>
<feature type="binding site" evidence="1">
    <location>
        <position position="215"/>
    </location>
    <ligand>
        <name>1-deoxy-D-xylulose 5-phosphate</name>
        <dbReference type="ChEBI" id="CHEBI:57792"/>
    </ligand>
</feature>
<feature type="binding site" evidence="1">
    <location>
        <position position="220"/>
    </location>
    <ligand>
        <name>1-deoxy-D-xylulose 5-phosphate</name>
        <dbReference type="ChEBI" id="CHEBI:57792"/>
    </ligand>
</feature>
<feature type="binding site" evidence="1">
    <location>
        <position position="221"/>
    </location>
    <ligand>
        <name>1-deoxy-D-xylulose 5-phosphate</name>
        <dbReference type="ChEBI" id="CHEBI:57792"/>
    </ligand>
</feature>
<feature type="binding site" evidence="1">
    <location>
        <position position="224"/>
    </location>
    <ligand>
        <name>1-deoxy-D-xylulose 5-phosphate</name>
        <dbReference type="ChEBI" id="CHEBI:57792"/>
    </ligand>
</feature>
<feature type="binding site" evidence="1">
    <location>
        <position position="224"/>
    </location>
    <ligand>
        <name>Mn(2+)</name>
        <dbReference type="ChEBI" id="CHEBI:29035"/>
    </ligand>
</feature>
<protein>
    <recommendedName>
        <fullName evidence="1">1-deoxy-D-xylulose 5-phosphate reductoisomerase</fullName>
        <shortName evidence="1">DXP reductoisomerase</shortName>
        <ecNumber evidence="1">1.1.1.267</ecNumber>
    </recommendedName>
    <alternativeName>
        <fullName evidence="1">1-deoxyxylulose-5-phosphate reductoisomerase</fullName>
    </alternativeName>
    <alternativeName>
        <fullName evidence="1">2-C-methyl-D-erythritol 4-phosphate synthase</fullName>
    </alternativeName>
</protein>
<organism>
    <name type="scientific">Paraburkholderia phytofirmans (strain DSM 17436 / LMG 22146 / PsJN)</name>
    <name type="common">Burkholderia phytofirmans</name>
    <dbReference type="NCBI Taxonomy" id="398527"/>
    <lineage>
        <taxon>Bacteria</taxon>
        <taxon>Pseudomonadati</taxon>
        <taxon>Pseudomonadota</taxon>
        <taxon>Betaproteobacteria</taxon>
        <taxon>Burkholderiales</taxon>
        <taxon>Burkholderiaceae</taxon>
        <taxon>Paraburkholderia</taxon>
    </lineage>
</organism>
<reference key="1">
    <citation type="journal article" date="2011" name="J. Bacteriol.">
        <title>Complete genome sequence of the plant growth-promoting endophyte Burkholderia phytofirmans strain PsJN.</title>
        <authorList>
            <person name="Weilharter A."/>
            <person name="Mitter B."/>
            <person name="Shin M.V."/>
            <person name="Chain P.S."/>
            <person name="Nowak J."/>
            <person name="Sessitsch A."/>
        </authorList>
    </citation>
    <scope>NUCLEOTIDE SEQUENCE [LARGE SCALE GENOMIC DNA]</scope>
    <source>
        <strain>DSM 17436 / LMG 22146 / PsJN</strain>
    </source>
</reference>
<gene>
    <name evidence="1" type="primary">dxr</name>
    <name type="ordered locus">Bphyt_2449</name>
</gene>
<evidence type="ECO:0000255" key="1">
    <source>
        <dbReference type="HAMAP-Rule" id="MF_00183"/>
    </source>
</evidence>
<sequence length="401" mass="42372">MQKRLTLLGSTGSIGDSTLDVVARHPERFSVYALTAHRNGDKLVEQCLRFQPEVAVVGDADTAASVAAKLREAGCKTEITYGPQALVDVSKSDGCDTVVAAIVGAAGLAPSLAAARAGKRILLANKEALVMSGAIFMDAVRDNGAVLLPVDSEHNAIFQCLPREAALHGGVSKIILTASGGPFRTREPATLVEVTPDEACKHPNWVMGRKISVDSATMMNKGLEVIEAHWLFNLPGERIEVLIHPQSVIHSMVSYADGSVLAQLGNPDMRTPIAHALAFPDRVDSGVAQLDLLQVASLSFEKPDYTRFPCLALAVKALAEGGLASAALNAANEIAVEAFLARQIGFMAIAQVVDAVLNALPNRSAHALEDVIEADAAARRAAAEFIARLPDGARRTERAVQ</sequence>
<accession>B2T5I8</accession>
<proteinExistence type="inferred from homology"/>